<proteinExistence type="inferred from homology"/>
<keyword id="KW-0030">Aminoacyl-tRNA synthetase</keyword>
<keyword id="KW-0067">ATP-binding</keyword>
<keyword id="KW-0963">Cytoplasm</keyword>
<keyword id="KW-0436">Ligase</keyword>
<keyword id="KW-0460">Magnesium</keyword>
<keyword id="KW-0479">Metal-binding</keyword>
<keyword id="KW-0547">Nucleotide-binding</keyword>
<keyword id="KW-0648">Protein biosynthesis</keyword>
<keyword id="KW-0694">RNA-binding</keyword>
<keyword id="KW-0820">tRNA-binding</keyword>
<feature type="chain" id="PRO_0000126850" description="Phenylalanine--tRNA ligase beta subunit">
    <location>
        <begin position="1"/>
        <end position="805"/>
    </location>
</feature>
<feature type="domain" description="tRNA-binding" evidence="1">
    <location>
        <begin position="39"/>
        <end position="148"/>
    </location>
</feature>
<feature type="domain" description="B5" evidence="1">
    <location>
        <begin position="399"/>
        <end position="474"/>
    </location>
</feature>
<feature type="domain" description="FDX-ACB" evidence="1">
    <location>
        <begin position="703"/>
        <end position="804"/>
    </location>
</feature>
<feature type="binding site" evidence="1">
    <location>
        <position position="452"/>
    </location>
    <ligand>
        <name>Mg(2+)</name>
        <dbReference type="ChEBI" id="CHEBI:18420"/>
        <note>shared with alpha subunit</note>
    </ligand>
</feature>
<feature type="binding site" evidence="1">
    <location>
        <position position="458"/>
    </location>
    <ligand>
        <name>Mg(2+)</name>
        <dbReference type="ChEBI" id="CHEBI:18420"/>
        <note>shared with alpha subunit</note>
    </ligand>
</feature>
<feature type="binding site" evidence="1">
    <location>
        <position position="461"/>
    </location>
    <ligand>
        <name>Mg(2+)</name>
        <dbReference type="ChEBI" id="CHEBI:18420"/>
        <note>shared with alpha subunit</note>
    </ligand>
</feature>
<feature type="binding site" evidence="1">
    <location>
        <position position="462"/>
    </location>
    <ligand>
        <name>Mg(2+)</name>
        <dbReference type="ChEBI" id="CHEBI:18420"/>
        <note>shared with alpha subunit</note>
    </ligand>
</feature>
<organism>
    <name type="scientific">Bordetella bronchiseptica (strain ATCC BAA-588 / NCTC 13252 / RB50)</name>
    <name type="common">Alcaligenes bronchisepticus</name>
    <dbReference type="NCBI Taxonomy" id="257310"/>
    <lineage>
        <taxon>Bacteria</taxon>
        <taxon>Pseudomonadati</taxon>
        <taxon>Pseudomonadota</taxon>
        <taxon>Betaproteobacteria</taxon>
        <taxon>Burkholderiales</taxon>
        <taxon>Alcaligenaceae</taxon>
        <taxon>Bordetella</taxon>
    </lineage>
</organism>
<dbReference type="EC" id="6.1.1.20" evidence="1"/>
<dbReference type="EMBL" id="BX640443">
    <property type="protein sequence ID" value="CAE32537.1"/>
    <property type="molecule type" value="Genomic_DNA"/>
</dbReference>
<dbReference type="RefSeq" id="WP_010926360.1">
    <property type="nucleotide sequence ID" value="NC_002927.3"/>
</dbReference>
<dbReference type="SMR" id="Q7WKR4"/>
<dbReference type="GeneID" id="56478212"/>
<dbReference type="KEGG" id="bbr:BB2041"/>
<dbReference type="eggNOG" id="COG0072">
    <property type="taxonomic scope" value="Bacteria"/>
</dbReference>
<dbReference type="eggNOG" id="COG0073">
    <property type="taxonomic scope" value="Bacteria"/>
</dbReference>
<dbReference type="HOGENOM" id="CLU_016891_0_0_4"/>
<dbReference type="Proteomes" id="UP000001027">
    <property type="component" value="Chromosome"/>
</dbReference>
<dbReference type="GO" id="GO:0009328">
    <property type="term" value="C:phenylalanine-tRNA ligase complex"/>
    <property type="evidence" value="ECO:0007669"/>
    <property type="project" value="TreeGrafter"/>
</dbReference>
<dbReference type="GO" id="GO:0005524">
    <property type="term" value="F:ATP binding"/>
    <property type="evidence" value="ECO:0007669"/>
    <property type="project" value="UniProtKB-UniRule"/>
</dbReference>
<dbReference type="GO" id="GO:0000287">
    <property type="term" value="F:magnesium ion binding"/>
    <property type="evidence" value="ECO:0007669"/>
    <property type="project" value="UniProtKB-UniRule"/>
</dbReference>
<dbReference type="GO" id="GO:0004826">
    <property type="term" value="F:phenylalanine-tRNA ligase activity"/>
    <property type="evidence" value="ECO:0007669"/>
    <property type="project" value="UniProtKB-UniRule"/>
</dbReference>
<dbReference type="GO" id="GO:0000049">
    <property type="term" value="F:tRNA binding"/>
    <property type="evidence" value="ECO:0007669"/>
    <property type="project" value="UniProtKB-KW"/>
</dbReference>
<dbReference type="GO" id="GO:0006432">
    <property type="term" value="P:phenylalanyl-tRNA aminoacylation"/>
    <property type="evidence" value="ECO:0007669"/>
    <property type="project" value="UniProtKB-UniRule"/>
</dbReference>
<dbReference type="CDD" id="cd00769">
    <property type="entry name" value="PheRS_beta_core"/>
    <property type="match status" value="1"/>
</dbReference>
<dbReference type="CDD" id="cd02796">
    <property type="entry name" value="tRNA_bind_bactPheRS"/>
    <property type="match status" value="1"/>
</dbReference>
<dbReference type="FunFam" id="2.40.50.140:FF:000045">
    <property type="entry name" value="Phenylalanine--tRNA ligase beta subunit"/>
    <property type="match status" value="1"/>
</dbReference>
<dbReference type="FunFam" id="3.30.56.10:FF:000002">
    <property type="entry name" value="Phenylalanine--tRNA ligase beta subunit"/>
    <property type="match status" value="1"/>
</dbReference>
<dbReference type="FunFam" id="3.30.930.10:FF:000022">
    <property type="entry name" value="Phenylalanine--tRNA ligase beta subunit"/>
    <property type="match status" value="1"/>
</dbReference>
<dbReference type="Gene3D" id="3.30.56.10">
    <property type="match status" value="2"/>
</dbReference>
<dbReference type="Gene3D" id="3.30.930.10">
    <property type="entry name" value="Bira Bifunctional Protein, Domain 2"/>
    <property type="match status" value="1"/>
</dbReference>
<dbReference type="Gene3D" id="3.30.70.380">
    <property type="entry name" value="Ferrodoxin-fold anticodon-binding domain"/>
    <property type="match status" value="1"/>
</dbReference>
<dbReference type="Gene3D" id="2.40.50.140">
    <property type="entry name" value="Nucleic acid-binding proteins"/>
    <property type="match status" value="1"/>
</dbReference>
<dbReference type="Gene3D" id="3.50.40.10">
    <property type="entry name" value="Phenylalanyl-trna Synthetase, Chain B, domain 3"/>
    <property type="match status" value="1"/>
</dbReference>
<dbReference type="HAMAP" id="MF_00283">
    <property type="entry name" value="Phe_tRNA_synth_beta1"/>
    <property type="match status" value="1"/>
</dbReference>
<dbReference type="InterPro" id="IPR045864">
    <property type="entry name" value="aa-tRNA-synth_II/BPL/LPL"/>
</dbReference>
<dbReference type="InterPro" id="IPR005146">
    <property type="entry name" value="B3/B4_tRNA-bd"/>
</dbReference>
<dbReference type="InterPro" id="IPR009061">
    <property type="entry name" value="DNA-bd_dom_put_sf"/>
</dbReference>
<dbReference type="InterPro" id="IPR005121">
    <property type="entry name" value="Fdx_antiC-bd"/>
</dbReference>
<dbReference type="InterPro" id="IPR036690">
    <property type="entry name" value="Fdx_antiC-bd_sf"/>
</dbReference>
<dbReference type="InterPro" id="IPR012340">
    <property type="entry name" value="NA-bd_OB-fold"/>
</dbReference>
<dbReference type="InterPro" id="IPR045060">
    <property type="entry name" value="Phe-tRNA-ligase_IIc_bsu"/>
</dbReference>
<dbReference type="InterPro" id="IPR004532">
    <property type="entry name" value="Phe-tRNA-ligase_IIc_bsu_bact"/>
</dbReference>
<dbReference type="InterPro" id="IPR020825">
    <property type="entry name" value="Phe-tRNA_synthase-like_B3/B4"/>
</dbReference>
<dbReference type="InterPro" id="IPR041616">
    <property type="entry name" value="PheRS_beta_core"/>
</dbReference>
<dbReference type="InterPro" id="IPR002547">
    <property type="entry name" value="tRNA-bd_dom"/>
</dbReference>
<dbReference type="InterPro" id="IPR033714">
    <property type="entry name" value="tRNA_bind_bactPheRS"/>
</dbReference>
<dbReference type="InterPro" id="IPR005147">
    <property type="entry name" value="tRNA_synthase_B5-dom"/>
</dbReference>
<dbReference type="NCBIfam" id="TIGR00472">
    <property type="entry name" value="pheT_bact"/>
    <property type="match status" value="1"/>
</dbReference>
<dbReference type="NCBIfam" id="NF045760">
    <property type="entry name" value="YtpR"/>
    <property type="match status" value="1"/>
</dbReference>
<dbReference type="PANTHER" id="PTHR10947:SF0">
    <property type="entry name" value="PHENYLALANINE--TRNA LIGASE BETA SUBUNIT"/>
    <property type="match status" value="1"/>
</dbReference>
<dbReference type="PANTHER" id="PTHR10947">
    <property type="entry name" value="PHENYLALANYL-TRNA SYNTHETASE BETA CHAIN AND LEUCINE-RICH REPEAT-CONTAINING PROTEIN 47"/>
    <property type="match status" value="1"/>
</dbReference>
<dbReference type="Pfam" id="PF03483">
    <property type="entry name" value="B3_4"/>
    <property type="match status" value="1"/>
</dbReference>
<dbReference type="Pfam" id="PF03484">
    <property type="entry name" value="B5"/>
    <property type="match status" value="1"/>
</dbReference>
<dbReference type="Pfam" id="PF03147">
    <property type="entry name" value="FDX-ACB"/>
    <property type="match status" value="1"/>
</dbReference>
<dbReference type="Pfam" id="PF01588">
    <property type="entry name" value="tRNA_bind"/>
    <property type="match status" value="1"/>
</dbReference>
<dbReference type="Pfam" id="PF17759">
    <property type="entry name" value="tRNA_synthFbeta"/>
    <property type="match status" value="1"/>
</dbReference>
<dbReference type="SMART" id="SM00873">
    <property type="entry name" value="B3_4"/>
    <property type="match status" value="1"/>
</dbReference>
<dbReference type="SMART" id="SM00874">
    <property type="entry name" value="B5"/>
    <property type="match status" value="1"/>
</dbReference>
<dbReference type="SMART" id="SM00896">
    <property type="entry name" value="FDX-ACB"/>
    <property type="match status" value="1"/>
</dbReference>
<dbReference type="SUPFAM" id="SSF54991">
    <property type="entry name" value="Anticodon-binding domain of PheRS"/>
    <property type="match status" value="1"/>
</dbReference>
<dbReference type="SUPFAM" id="SSF55681">
    <property type="entry name" value="Class II aaRS and biotin synthetases"/>
    <property type="match status" value="1"/>
</dbReference>
<dbReference type="SUPFAM" id="SSF50249">
    <property type="entry name" value="Nucleic acid-binding proteins"/>
    <property type="match status" value="1"/>
</dbReference>
<dbReference type="SUPFAM" id="SSF56037">
    <property type="entry name" value="PheT/TilS domain"/>
    <property type="match status" value="1"/>
</dbReference>
<dbReference type="SUPFAM" id="SSF46955">
    <property type="entry name" value="Putative DNA-binding domain"/>
    <property type="match status" value="1"/>
</dbReference>
<dbReference type="PROSITE" id="PS51483">
    <property type="entry name" value="B5"/>
    <property type="match status" value="1"/>
</dbReference>
<dbReference type="PROSITE" id="PS51447">
    <property type="entry name" value="FDX_ACB"/>
    <property type="match status" value="1"/>
</dbReference>
<dbReference type="PROSITE" id="PS50886">
    <property type="entry name" value="TRBD"/>
    <property type="match status" value="1"/>
</dbReference>
<protein>
    <recommendedName>
        <fullName evidence="1">Phenylalanine--tRNA ligase beta subunit</fullName>
        <ecNumber evidence="1">6.1.1.20</ecNumber>
    </recommendedName>
    <alternativeName>
        <fullName evidence="1">Phenylalanyl-tRNA synthetase beta subunit</fullName>
        <shortName evidence="1">PheRS</shortName>
    </alternativeName>
</protein>
<reference key="1">
    <citation type="journal article" date="2003" name="Nat. Genet.">
        <title>Comparative analysis of the genome sequences of Bordetella pertussis, Bordetella parapertussis and Bordetella bronchiseptica.</title>
        <authorList>
            <person name="Parkhill J."/>
            <person name="Sebaihia M."/>
            <person name="Preston A."/>
            <person name="Murphy L.D."/>
            <person name="Thomson N.R."/>
            <person name="Harris D.E."/>
            <person name="Holden M.T.G."/>
            <person name="Churcher C.M."/>
            <person name="Bentley S.D."/>
            <person name="Mungall K.L."/>
            <person name="Cerdeno-Tarraga A.-M."/>
            <person name="Temple L."/>
            <person name="James K.D."/>
            <person name="Harris B."/>
            <person name="Quail M.A."/>
            <person name="Achtman M."/>
            <person name="Atkin R."/>
            <person name="Baker S."/>
            <person name="Basham D."/>
            <person name="Bason N."/>
            <person name="Cherevach I."/>
            <person name="Chillingworth T."/>
            <person name="Collins M."/>
            <person name="Cronin A."/>
            <person name="Davis P."/>
            <person name="Doggett J."/>
            <person name="Feltwell T."/>
            <person name="Goble A."/>
            <person name="Hamlin N."/>
            <person name="Hauser H."/>
            <person name="Holroyd S."/>
            <person name="Jagels K."/>
            <person name="Leather S."/>
            <person name="Moule S."/>
            <person name="Norberczak H."/>
            <person name="O'Neil S."/>
            <person name="Ormond D."/>
            <person name="Price C."/>
            <person name="Rabbinowitsch E."/>
            <person name="Rutter S."/>
            <person name="Sanders M."/>
            <person name="Saunders D."/>
            <person name="Seeger K."/>
            <person name="Sharp S."/>
            <person name="Simmonds M."/>
            <person name="Skelton J."/>
            <person name="Squares R."/>
            <person name="Squares S."/>
            <person name="Stevens K."/>
            <person name="Unwin L."/>
            <person name="Whitehead S."/>
            <person name="Barrell B.G."/>
            <person name="Maskell D.J."/>
        </authorList>
    </citation>
    <scope>NUCLEOTIDE SEQUENCE [LARGE SCALE GENOMIC DNA]</scope>
    <source>
        <strain>ATCC BAA-588 / NCTC 13252 / RB50</strain>
    </source>
</reference>
<comment type="catalytic activity">
    <reaction evidence="1">
        <text>tRNA(Phe) + L-phenylalanine + ATP = L-phenylalanyl-tRNA(Phe) + AMP + diphosphate + H(+)</text>
        <dbReference type="Rhea" id="RHEA:19413"/>
        <dbReference type="Rhea" id="RHEA-COMP:9668"/>
        <dbReference type="Rhea" id="RHEA-COMP:9699"/>
        <dbReference type="ChEBI" id="CHEBI:15378"/>
        <dbReference type="ChEBI" id="CHEBI:30616"/>
        <dbReference type="ChEBI" id="CHEBI:33019"/>
        <dbReference type="ChEBI" id="CHEBI:58095"/>
        <dbReference type="ChEBI" id="CHEBI:78442"/>
        <dbReference type="ChEBI" id="CHEBI:78531"/>
        <dbReference type="ChEBI" id="CHEBI:456215"/>
        <dbReference type="EC" id="6.1.1.20"/>
    </reaction>
</comment>
<comment type="cofactor">
    <cofactor evidence="1">
        <name>Mg(2+)</name>
        <dbReference type="ChEBI" id="CHEBI:18420"/>
    </cofactor>
    <text evidence="1">Binds 2 magnesium ions per tetramer.</text>
</comment>
<comment type="subunit">
    <text evidence="1">Tetramer of two alpha and two beta subunits.</text>
</comment>
<comment type="subcellular location">
    <subcellularLocation>
        <location evidence="1">Cytoplasm</location>
    </subcellularLocation>
</comment>
<comment type="similarity">
    <text evidence="1">Belongs to the phenylalanyl-tRNA synthetase beta subunit family. Type 1 subfamily.</text>
</comment>
<sequence>MQFPESWLRSLVNPSIGTDELAHRLTMAGLEVEETEPAAPPFTGVVVAHIVDIAPHPDADKLRVCQVDDGSGALLQIVCGAPNAAAGLTVPLARVGAELPGGMKIGVAKMRGVQSSGMLCSARELGLSQDHAGLLELPAALRPGTDIRAALDLDDTLFTLKLTPNRADCLSILGVAREVAALTGTPLTAPAAEPVPVTIDHRLPVAIQAPDLCGRFAGRVIQGVNARAATPEWMKTRLERAGQRSVSALVDISNYVMLEVGRPSHVFDLDKIGGDLSVRWAREGETLELLNGQAVALDPKVGVVVAGEQVESLAGIMGGEATSVTLDTRNIYLEAAFWWPGAIAGRARRYKFSSEASHRFERGVDYASIPEHIELITRLILDICGGQAGPVDDQCVNLPVREPVRMRLARCHRVLGVAVERAEVAQIFTRLGLPFQEQGDDFVVTPPSYRFDIEIEEDLIEEVARVYGFERIPDVPPVARAKMHAQPEARRGAHAVRRLVAARDYQEVVNYSFVEAAWERDYAGNDNPVRLVNPIASHLSVMRSSLIAGLVAIVRHNANRKQSRVRLFELGRVFHRDPQLADGPLEVAGVRQPLMLAGVAWGGAVEEQWGVPHRQVDFYDVKQDVEALFGARADALRFVADRYPALHPGRSARIELDGQPIGWLGELHPQWTQQADLHHAPVVFELDFEALAERRLPAVRELSRQPAVVRDLALWVDAKLPAQAMLDTVAAAIARDPQLSVVQDAQVFDVWREKPVAGQTVTEKSLAFRFWLQDTEVTLDEARVADCIARIKDALVAAHNARQRA</sequence>
<evidence type="ECO:0000255" key="1">
    <source>
        <dbReference type="HAMAP-Rule" id="MF_00283"/>
    </source>
</evidence>
<name>SYFB_BORBR</name>
<gene>
    <name evidence="1" type="primary">pheT</name>
    <name type="ordered locus">BB2041</name>
</gene>
<accession>Q7WKR4</accession>